<protein>
    <recommendedName>
        <fullName>DEAD-box ATP-dependent RNA helicase 53</fullName>
        <ecNumber>3.6.4.13</ecNumber>
    </recommendedName>
</protein>
<dbReference type="EC" id="3.6.4.13"/>
<dbReference type="EMBL" id="AP008213">
    <property type="protein sequence ID" value="BAF20793.1"/>
    <property type="status" value="ALT_SEQ"/>
    <property type="molecule type" value="Genomic_DNA"/>
</dbReference>
<dbReference type="EMBL" id="AP014963">
    <property type="status" value="NOT_ANNOTATED_CDS"/>
    <property type="molecule type" value="Genomic_DNA"/>
</dbReference>
<dbReference type="EMBL" id="AK068871">
    <property type="status" value="NOT_ANNOTATED_CDS"/>
    <property type="molecule type" value="mRNA"/>
</dbReference>
<dbReference type="RefSeq" id="XP_015644679.1">
    <property type="nucleotide sequence ID" value="XM_015789193.1"/>
</dbReference>
<dbReference type="SMR" id="Q0D8N0"/>
<dbReference type="FunCoup" id="Q0D8N0">
    <property type="interactions" value="147"/>
</dbReference>
<dbReference type="STRING" id="39947.Q0D8N0"/>
<dbReference type="iPTMnet" id="Q0D8N0"/>
<dbReference type="PaxDb" id="39947-Q0D8N0"/>
<dbReference type="KEGG" id="dosa:Os07g0143700"/>
<dbReference type="eggNOG" id="KOG0331">
    <property type="taxonomic scope" value="Eukaryota"/>
</dbReference>
<dbReference type="HOGENOM" id="CLU_910846_0_0_1"/>
<dbReference type="InParanoid" id="Q0D8N0"/>
<dbReference type="OrthoDB" id="4255at2759"/>
<dbReference type="Proteomes" id="UP000000763">
    <property type="component" value="Chromosome 7"/>
</dbReference>
<dbReference type="Proteomes" id="UP000059680">
    <property type="component" value="Chromosome 7"/>
</dbReference>
<dbReference type="GO" id="GO:0005737">
    <property type="term" value="C:cytoplasm"/>
    <property type="evidence" value="ECO:0000318"/>
    <property type="project" value="GO_Central"/>
</dbReference>
<dbReference type="GO" id="GO:0005524">
    <property type="term" value="F:ATP binding"/>
    <property type="evidence" value="ECO:0007669"/>
    <property type="project" value="UniProtKB-KW"/>
</dbReference>
<dbReference type="GO" id="GO:0016887">
    <property type="term" value="F:ATP hydrolysis activity"/>
    <property type="evidence" value="ECO:0007669"/>
    <property type="project" value="RHEA"/>
</dbReference>
<dbReference type="GO" id="GO:0003723">
    <property type="term" value="F:RNA binding"/>
    <property type="evidence" value="ECO:0007669"/>
    <property type="project" value="UniProtKB-KW"/>
</dbReference>
<dbReference type="GO" id="GO:0003724">
    <property type="term" value="F:RNA helicase activity"/>
    <property type="evidence" value="ECO:0007669"/>
    <property type="project" value="UniProtKB-EC"/>
</dbReference>
<dbReference type="GO" id="GO:0000373">
    <property type="term" value="P:Group II intron splicing"/>
    <property type="evidence" value="ECO:0000318"/>
    <property type="project" value="GO_Central"/>
</dbReference>
<dbReference type="CDD" id="cd00268">
    <property type="entry name" value="DEADc"/>
    <property type="match status" value="1"/>
</dbReference>
<dbReference type="CDD" id="cd18787">
    <property type="entry name" value="SF2_C_DEAD"/>
    <property type="match status" value="1"/>
</dbReference>
<dbReference type="Gene3D" id="3.40.50.300">
    <property type="entry name" value="P-loop containing nucleotide triphosphate hydrolases"/>
    <property type="match status" value="2"/>
</dbReference>
<dbReference type="InterPro" id="IPR011545">
    <property type="entry name" value="DEAD/DEAH_box_helicase_dom"/>
</dbReference>
<dbReference type="InterPro" id="IPR050079">
    <property type="entry name" value="DEAD_box_RNA_helicase"/>
</dbReference>
<dbReference type="InterPro" id="IPR014001">
    <property type="entry name" value="Helicase_ATP-bd"/>
</dbReference>
<dbReference type="InterPro" id="IPR001650">
    <property type="entry name" value="Helicase_C-like"/>
</dbReference>
<dbReference type="InterPro" id="IPR027417">
    <property type="entry name" value="P-loop_NTPase"/>
</dbReference>
<dbReference type="InterPro" id="IPR014014">
    <property type="entry name" value="RNA_helicase_DEAD_Q_motif"/>
</dbReference>
<dbReference type="PANTHER" id="PTHR47959">
    <property type="entry name" value="ATP-DEPENDENT RNA HELICASE RHLE-RELATED"/>
    <property type="match status" value="1"/>
</dbReference>
<dbReference type="PANTHER" id="PTHR47959:SF23">
    <property type="entry name" value="HELICASE ATP-BINDING DOMAIN-CONTAINING PROTEIN"/>
    <property type="match status" value="1"/>
</dbReference>
<dbReference type="Pfam" id="PF00270">
    <property type="entry name" value="DEAD"/>
    <property type="match status" value="1"/>
</dbReference>
<dbReference type="Pfam" id="PF00271">
    <property type="entry name" value="Helicase_C"/>
    <property type="match status" value="1"/>
</dbReference>
<dbReference type="SMART" id="SM00487">
    <property type="entry name" value="DEXDc"/>
    <property type="match status" value="1"/>
</dbReference>
<dbReference type="SMART" id="SM00490">
    <property type="entry name" value="HELICc"/>
    <property type="match status" value="1"/>
</dbReference>
<dbReference type="SUPFAM" id="SSF52540">
    <property type="entry name" value="P-loop containing nucleoside triphosphate hydrolases"/>
    <property type="match status" value="1"/>
</dbReference>
<dbReference type="PROSITE" id="PS51192">
    <property type="entry name" value="HELICASE_ATP_BIND_1"/>
    <property type="match status" value="1"/>
</dbReference>
<dbReference type="PROSITE" id="PS51194">
    <property type="entry name" value="HELICASE_CTER"/>
    <property type="match status" value="1"/>
</dbReference>
<dbReference type="PROSITE" id="PS51195">
    <property type="entry name" value="Q_MOTIF"/>
    <property type="match status" value="1"/>
</dbReference>
<accession>Q0D8N0</accession>
<proteinExistence type="evidence at transcript level"/>
<feature type="chain" id="PRO_0000282476" description="DEAD-box ATP-dependent RNA helicase 53">
    <location>
        <begin position="1"/>
        <end position="602"/>
    </location>
</feature>
<feature type="domain" description="Helicase ATP-binding" evidence="1">
    <location>
        <begin position="115"/>
        <end position="288"/>
    </location>
</feature>
<feature type="domain" description="Helicase C-terminal" evidence="2">
    <location>
        <begin position="317"/>
        <end position="462"/>
    </location>
</feature>
<feature type="region of interest" description="Disordered" evidence="3">
    <location>
        <begin position="33"/>
        <end position="76"/>
    </location>
</feature>
<feature type="region of interest" description="Disordered" evidence="3">
    <location>
        <begin position="503"/>
        <end position="602"/>
    </location>
</feature>
<feature type="short sequence motif" description="Q motif">
    <location>
        <begin position="84"/>
        <end position="112"/>
    </location>
</feature>
<feature type="short sequence motif" description="DEAD box">
    <location>
        <begin position="236"/>
        <end position="239"/>
    </location>
</feature>
<feature type="compositionally biased region" description="Low complexity" evidence="3">
    <location>
        <begin position="33"/>
        <end position="43"/>
    </location>
</feature>
<feature type="binding site" evidence="1">
    <location>
        <begin position="128"/>
        <end position="135"/>
    </location>
    <ligand>
        <name>ATP</name>
        <dbReference type="ChEBI" id="CHEBI:30616"/>
    </ligand>
</feature>
<feature type="splice variant" id="VSP_024164" description="In isoform 2." evidence="5">
    <location>
        <begin position="324"/>
        <end position="340"/>
    </location>
</feature>
<feature type="splice variant" id="VSP_024165" description="In isoform 3." evidence="4">
    <original>EHANGGK</original>
    <variation>VSTLLNV</variation>
    <location>
        <begin position="324"/>
        <end position="330"/>
    </location>
</feature>
<feature type="splice variant" id="VSP_024166" description="In isoform 3." evidence="4">
    <location>
        <begin position="331"/>
        <end position="602"/>
    </location>
</feature>
<feature type="sequence conflict" description="In Ref. 4; AK068871." evidence="5" ref="4">
    <original>M</original>
    <variation>V</variation>
    <location>
        <position position="1"/>
    </location>
</feature>
<feature type="sequence conflict" description="In Ref. 4; AK068871." evidence="5" ref="4">
    <original>R</original>
    <variation>S</variation>
    <location>
        <position position="88"/>
    </location>
</feature>
<reference key="1">
    <citation type="journal article" date="2005" name="Nature">
        <title>The map-based sequence of the rice genome.</title>
        <authorList>
            <consortium name="International rice genome sequencing project (IRGSP)"/>
        </authorList>
    </citation>
    <scope>NUCLEOTIDE SEQUENCE [LARGE SCALE GENOMIC DNA]</scope>
    <source>
        <strain>cv. Nipponbare</strain>
    </source>
</reference>
<reference key="2">
    <citation type="journal article" date="2008" name="Nucleic Acids Res.">
        <title>The rice annotation project database (RAP-DB): 2008 update.</title>
        <authorList>
            <consortium name="The rice annotation project (RAP)"/>
        </authorList>
    </citation>
    <scope>GENOME REANNOTATION</scope>
    <source>
        <strain>cv. Nipponbare</strain>
    </source>
</reference>
<reference key="3">
    <citation type="journal article" date="2013" name="Rice">
        <title>Improvement of the Oryza sativa Nipponbare reference genome using next generation sequence and optical map data.</title>
        <authorList>
            <person name="Kawahara Y."/>
            <person name="de la Bastide M."/>
            <person name="Hamilton J.P."/>
            <person name="Kanamori H."/>
            <person name="McCombie W.R."/>
            <person name="Ouyang S."/>
            <person name="Schwartz D.C."/>
            <person name="Tanaka T."/>
            <person name="Wu J."/>
            <person name="Zhou S."/>
            <person name="Childs K.L."/>
            <person name="Davidson R.M."/>
            <person name="Lin H."/>
            <person name="Quesada-Ocampo L."/>
            <person name="Vaillancourt B."/>
            <person name="Sakai H."/>
            <person name="Lee S.S."/>
            <person name="Kim J."/>
            <person name="Numa H."/>
            <person name="Itoh T."/>
            <person name="Buell C.R."/>
            <person name="Matsumoto T."/>
        </authorList>
    </citation>
    <scope>GENOME REANNOTATION</scope>
    <source>
        <strain>cv. Nipponbare</strain>
    </source>
</reference>
<reference key="4">
    <citation type="journal article" date="2003" name="Science">
        <title>Collection, mapping, and annotation of over 28,000 cDNA clones from japonica rice.</title>
        <authorList>
            <consortium name="The rice full-length cDNA consortium"/>
        </authorList>
    </citation>
    <scope>NUCLEOTIDE SEQUENCE [LARGE SCALE MRNA] (ISOFORM 3)</scope>
    <source>
        <strain>cv. Nipponbare</strain>
    </source>
</reference>
<evidence type="ECO:0000255" key="1">
    <source>
        <dbReference type="PROSITE-ProRule" id="PRU00541"/>
    </source>
</evidence>
<evidence type="ECO:0000255" key="2">
    <source>
        <dbReference type="PROSITE-ProRule" id="PRU00542"/>
    </source>
</evidence>
<evidence type="ECO:0000256" key="3">
    <source>
        <dbReference type="SAM" id="MobiDB-lite"/>
    </source>
</evidence>
<evidence type="ECO:0000303" key="4">
    <source>
    </source>
</evidence>
<evidence type="ECO:0000305" key="5"/>
<keyword id="KW-0025">Alternative splicing</keyword>
<keyword id="KW-0067">ATP-binding</keyword>
<keyword id="KW-0347">Helicase</keyword>
<keyword id="KW-0378">Hydrolase</keyword>
<keyword id="KW-0547">Nucleotide-binding</keyword>
<keyword id="KW-1185">Reference proteome</keyword>
<keyword id="KW-0694">RNA-binding</keyword>
<comment type="catalytic activity">
    <reaction>
        <text>ATP + H2O = ADP + phosphate + H(+)</text>
        <dbReference type="Rhea" id="RHEA:13065"/>
        <dbReference type="ChEBI" id="CHEBI:15377"/>
        <dbReference type="ChEBI" id="CHEBI:15378"/>
        <dbReference type="ChEBI" id="CHEBI:30616"/>
        <dbReference type="ChEBI" id="CHEBI:43474"/>
        <dbReference type="ChEBI" id="CHEBI:456216"/>
        <dbReference type="EC" id="3.6.4.13"/>
    </reaction>
</comment>
<comment type="alternative products">
    <event type="alternative splicing"/>
    <isoform>
        <id>Q0D8N0-1</id>
        <name>1</name>
        <sequence type="displayed"/>
    </isoform>
    <isoform>
        <id>Q0D8N0-2</id>
        <name>2</name>
        <sequence type="described" ref="VSP_024164"/>
    </isoform>
    <isoform>
        <id>Q0D8N0-3</id>
        <name>3</name>
        <sequence type="described" ref="VSP_024165 VSP_024166"/>
    </isoform>
</comment>
<comment type="domain">
    <text>The Q motif is unique to and characteristic of the DEAD box family of RNA helicases and controls ATP binding and hydrolysis.</text>
</comment>
<comment type="similarity">
    <text evidence="5">Belongs to the DEAD box helicase family. DDX21/DDX50 subfamily.</text>
</comment>
<comment type="sequence caution" evidence="5">
    <conflict type="erroneous gene model prediction">
        <sequence resource="EMBL-CDS" id="BAF20793"/>
    </conflict>
</comment>
<organism>
    <name type="scientific">Oryza sativa subsp. japonica</name>
    <name type="common">Rice</name>
    <dbReference type="NCBI Taxonomy" id="39947"/>
    <lineage>
        <taxon>Eukaryota</taxon>
        <taxon>Viridiplantae</taxon>
        <taxon>Streptophyta</taxon>
        <taxon>Embryophyta</taxon>
        <taxon>Tracheophyta</taxon>
        <taxon>Spermatophyta</taxon>
        <taxon>Magnoliopsida</taxon>
        <taxon>Liliopsida</taxon>
        <taxon>Poales</taxon>
        <taxon>Poaceae</taxon>
        <taxon>BOP clade</taxon>
        <taxon>Oryzoideae</taxon>
        <taxon>Oryzeae</taxon>
        <taxon>Oryzinae</taxon>
        <taxon>Oryza</taxon>
        <taxon>Oryza sativa</taxon>
    </lineage>
</organism>
<name>RH53_ORYSJ</name>
<sequence length="602" mass="65127">MFSLLSRALCAASSSPAAPRGRSLLAALLSPSASPLDPCRGPAAPEPPRRRAFHGSPSPLGFRSTPASWSSPEAGAAVGGDDGLEVARLGISPWIVERLAARGITRLFPIQRAVLDPAMQGKDMIGRARTGTGKTLAFGIPIMDRILRHNEKNGSGRNPLAIILAPTRELARQVEKEFKESAPLDSLCVYGGVPISHQMRALNYGVDVVVGTPGRIIDLLRRGVLNLSEIQFVVLDEADQMLAVGFDEDVEVIMENLPQNRQSMLFSATMPSWIRKITSKYLKDPIIIDLVGDEDQKLPEGISLYSIASEHYGKPSILGPLIKEHANGGKCIVFTQTKREADRLAYAMGRSYACQALHGDISQNQRERTLSGFRDGRFNILVATDVAARGLDIPNVDLVIHYELPNTSELFVHRSGRTARAGKKGSAILIYTNDQARAVRIIEQDIGCKFTELPKIEVADEASDMFNVVRDNRSRLAGSPRTGGSSFGRGGYGGFGEGRSRGFGDFDGFGSSPNRGGRSRDAGSRYGSGFGDFRRPSNAFGRSSSKQPDGFGFGDFGEGNFSRNGNRRSRSFDDSGSTRYSRRPNGFGTSDFGRSGGFDDSN</sequence>
<gene>
    <name type="ordered locus">Os07g0143700</name>
    <name type="ordered locus">LOC_Os07g05050</name>
</gene>